<geneLocation type="chloroplast"/>
<gene>
    <name evidence="2" type="primary">psbC</name>
</gene>
<dbReference type="EMBL" id="AP009375">
    <property type="protein sequence ID" value="BAF50545.1"/>
    <property type="molecule type" value="Genomic_DNA"/>
</dbReference>
<dbReference type="RefSeq" id="YP_001123721.1">
    <property type="nucleotide sequence ID" value="NC_009274.1"/>
</dbReference>
<dbReference type="SMR" id="A4QLJ0"/>
<dbReference type="GeneID" id="4964841"/>
<dbReference type="GO" id="GO:0009535">
    <property type="term" value="C:chloroplast thylakoid membrane"/>
    <property type="evidence" value="ECO:0007669"/>
    <property type="project" value="UniProtKB-SubCell"/>
</dbReference>
<dbReference type="GO" id="GO:0009523">
    <property type="term" value="C:photosystem II"/>
    <property type="evidence" value="ECO:0007669"/>
    <property type="project" value="UniProtKB-KW"/>
</dbReference>
<dbReference type="GO" id="GO:0016168">
    <property type="term" value="F:chlorophyll binding"/>
    <property type="evidence" value="ECO:0007669"/>
    <property type="project" value="UniProtKB-UniRule"/>
</dbReference>
<dbReference type="GO" id="GO:0045156">
    <property type="term" value="F:electron transporter, transferring electrons within the cyclic electron transport pathway of photosynthesis activity"/>
    <property type="evidence" value="ECO:0007669"/>
    <property type="project" value="InterPro"/>
</dbReference>
<dbReference type="GO" id="GO:0046872">
    <property type="term" value="F:metal ion binding"/>
    <property type="evidence" value="ECO:0007669"/>
    <property type="project" value="UniProtKB-KW"/>
</dbReference>
<dbReference type="GO" id="GO:0009772">
    <property type="term" value="P:photosynthetic electron transport in photosystem II"/>
    <property type="evidence" value="ECO:0007669"/>
    <property type="project" value="InterPro"/>
</dbReference>
<dbReference type="FunFam" id="1.10.10.670:FF:000001">
    <property type="entry name" value="Photosystem II CP43 reaction center protein"/>
    <property type="match status" value="1"/>
</dbReference>
<dbReference type="Gene3D" id="1.10.10.670">
    <property type="entry name" value="photosystem ii from thermosynechococcus elongatus"/>
    <property type="match status" value="1"/>
</dbReference>
<dbReference type="HAMAP" id="MF_01496">
    <property type="entry name" value="PSII_PsbC_CP43"/>
    <property type="match status" value="1"/>
</dbReference>
<dbReference type="InterPro" id="IPR000932">
    <property type="entry name" value="PS_antenna-like"/>
</dbReference>
<dbReference type="InterPro" id="IPR036001">
    <property type="entry name" value="PS_II_antenna-like_sf"/>
</dbReference>
<dbReference type="InterPro" id="IPR005869">
    <property type="entry name" value="PSII_PsbC"/>
</dbReference>
<dbReference type="InterPro" id="IPR044900">
    <property type="entry name" value="PSII_PsbC_sf"/>
</dbReference>
<dbReference type="NCBIfam" id="TIGR01153">
    <property type="entry name" value="psbC"/>
    <property type="match status" value="1"/>
</dbReference>
<dbReference type="Pfam" id="PF00421">
    <property type="entry name" value="PSII"/>
    <property type="match status" value="1"/>
</dbReference>
<dbReference type="SUPFAM" id="SSF161077">
    <property type="entry name" value="Photosystem II antenna protein-like"/>
    <property type="match status" value="1"/>
</dbReference>
<feature type="propeptide" id="PRO_0000431161" evidence="2">
    <location>
        <begin position="1"/>
        <end position="14"/>
    </location>
</feature>
<feature type="chain" id="PRO_0000361414" description="Photosystem II CP43 reaction center protein" evidence="2">
    <location>
        <begin position="15"/>
        <end position="473"/>
    </location>
</feature>
<feature type="transmembrane region" description="Helical" evidence="2">
    <location>
        <begin position="69"/>
        <end position="93"/>
    </location>
</feature>
<feature type="transmembrane region" description="Helical" evidence="2">
    <location>
        <begin position="134"/>
        <end position="155"/>
    </location>
</feature>
<feature type="transmembrane region" description="Helical" evidence="2">
    <location>
        <begin position="178"/>
        <end position="200"/>
    </location>
</feature>
<feature type="transmembrane region" description="Helical" evidence="2">
    <location>
        <begin position="255"/>
        <end position="275"/>
    </location>
</feature>
<feature type="transmembrane region" description="Helical" evidence="2">
    <location>
        <begin position="291"/>
        <end position="312"/>
    </location>
</feature>
<feature type="transmembrane region" description="Helical" evidence="2">
    <location>
        <begin position="447"/>
        <end position="471"/>
    </location>
</feature>
<feature type="binding site" evidence="2">
    <location>
        <position position="367"/>
    </location>
    <ligand>
        <name>[CaMn4O5] cluster</name>
        <dbReference type="ChEBI" id="CHEBI:189552"/>
    </ligand>
</feature>
<feature type="modified residue" description="N-acetylthreonine" evidence="1 2">
    <location>
        <position position="15"/>
    </location>
</feature>
<feature type="modified residue" description="Phosphothreonine" evidence="1 2">
    <location>
        <position position="15"/>
    </location>
</feature>
<reference key="1">
    <citation type="submission" date="2007-03" db="EMBL/GenBank/DDBJ databases">
        <title>Sequencing analysis of Lobularia maritima chloroplast DNA.</title>
        <authorList>
            <person name="Hosouchi T."/>
            <person name="Tsuruoka H."/>
            <person name="Kotani H."/>
        </authorList>
    </citation>
    <scope>NUCLEOTIDE SEQUENCE [LARGE SCALE GENOMIC DNA]</scope>
</reference>
<evidence type="ECO:0000250" key="1">
    <source>
        <dbReference type="UniProtKB" id="P56778"/>
    </source>
</evidence>
<evidence type="ECO:0000255" key="2">
    <source>
        <dbReference type="HAMAP-Rule" id="MF_01496"/>
    </source>
</evidence>
<proteinExistence type="inferred from homology"/>
<name>PSBC_LOBMA</name>
<sequence>MKTLYSLRRFYHVETLFNGTLALAGRDQETTGFAWWAGNARLINLSGKLLGAHVAHAGLIVFWAGAMNLFEVAHFVPEKPMYEQGLILLPHLATLGWGVGPGGEVIDTFPYFVSGVLHLISSAVLGFGGIYHALLGPETLEESFPFFGYVWKDRNKMTTILGIHLILLGVGAFLLVFKALYFGGVYDTWAPGGGDVRKITNLTLSPSVIFGYLLKSPFGGEGWIVSVDDLEDIIGGHVWLGSICIFGGIWHILTKPFAWARRALVWSGEAYLSYSLAALSVCGFIACCFVWFNNTAYPSEFYGPTGPEASQAQAFTFLVRDQRLGANVGSAQGPTGLGKYLMRSPTGEVIFGGETMRFWDLRAPWLEPLRGPNGLDLSRLKKDIQPWQERRSAEYMTHAPLGSLNSVGGVATEINAVNYVSPRSWLSTSHFVLGFFLFVGHLWHAGRARAAAAGFEKGIDRDFEPVLSMTPLN</sequence>
<keyword id="KW-0007">Acetylation</keyword>
<keyword id="KW-0148">Chlorophyll</keyword>
<keyword id="KW-0150">Chloroplast</keyword>
<keyword id="KW-0157">Chromophore</keyword>
<keyword id="KW-0464">Manganese</keyword>
<keyword id="KW-0472">Membrane</keyword>
<keyword id="KW-0479">Metal-binding</keyword>
<keyword id="KW-0597">Phosphoprotein</keyword>
<keyword id="KW-0602">Photosynthesis</keyword>
<keyword id="KW-0604">Photosystem II</keyword>
<keyword id="KW-0934">Plastid</keyword>
<keyword id="KW-0793">Thylakoid</keyword>
<keyword id="KW-0812">Transmembrane</keyword>
<keyword id="KW-1133">Transmembrane helix</keyword>
<accession>A4QLJ0</accession>
<protein>
    <recommendedName>
        <fullName evidence="2">Photosystem II CP43 reaction center protein</fullName>
    </recommendedName>
    <alternativeName>
        <fullName evidence="2">PSII 43 kDa protein</fullName>
    </alternativeName>
    <alternativeName>
        <fullName evidence="2">Protein CP-43</fullName>
    </alternativeName>
</protein>
<comment type="function">
    <text evidence="2">One of the components of the core complex of photosystem II (PSII). It binds chlorophyll and helps catalyze the primary light-induced photochemical processes of PSII. PSII is a light-driven water:plastoquinone oxidoreductase, using light energy to abstract electrons from H(2)O, generating O(2) and a proton gradient subsequently used for ATP formation.</text>
</comment>
<comment type="cofactor">
    <text evidence="2">Binds multiple chlorophylls and provides some of the ligands for the Ca-4Mn-5O cluster of the oxygen-evolving complex. It may also provide a ligand for a Cl- that is required for oxygen evolution. PSII binds additional chlorophylls, carotenoids and specific lipids.</text>
</comment>
<comment type="subunit">
    <text evidence="2">PSII is composed of 1 copy each of membrane proteins PsbA, PsbB, PsbC, PsbD, PsbE, PsbF, PsbH, PsbI, PsbJ, PsbK, PsbL, PsbM, PsbT, PsbX, PsbY, PsbZ, Psb30/Ycf12, at least 3 peripheral proteins of the oxygen-evolving complex and a large number of cofactors. It forms dimeric complexes.</text>
</comment>
<comment type="subcellular location">
    <subcellularLocation>
        <location evidence="2">Plastid</location>
        <location evidence="2">Chloroplast thylakoid membrane</location>
        <topology evidence="2">Multi-pass membrane protein</topology>
    </subcellularLocation>
</comment>
<comment type="similarity">
    <text evidence="2">Belongs to the PsbB/PsbC family. PsbC subfamily.</text>
</comment>
<organism>
    <name type="scientific">Lobularia maritima</name>
    <name type="common">Sweet alyssum</name>
    <name type="synonym">Alyssum maritimum</name>
    <dbReference type="NCBI Taxonomy" id="226051"/>
    <lineage>
        <taxon>Eukaryota</taxon>
        <taxon>Viridiplantae</taxon>
        <taxon>Streptophyta</taxon>
        <taxon>Embryophyta</taxon>
        <taxon>Tracheophyta</taxon>
        <taxon>Spermatophyta</taxon>
        <taxon>Magnoliopsida</taxon>
        <taxon>eudicotyledons</taxon>
        <taxon>Gunneridae</taxon>
        <taxon>Pentapetalae</taxon>
        <taxon>rosids</taxon>
        <taxon>malvids</taxon>
        <taxon>Brassicales</taxon>
        <taxon>Brassicaceae</taxon>
        <taxon>Anastaticeae</taxon>
        <taxon>Lobularia</taxon>
    </lineage>
</organism>